<reference key="1">
    <citation type="submission" date="2008-02" db="EMBL/GenBank/DDBJ databases">
        <title>Complete sequence of Haemophilus somnus 2336.</title>
        <authorList>
            <consortium name="US DOE Joint Genome Institute"/>
            <person name="Siddaramappa S."/>
            <person name="Duncan A.J."/>
            <person name="Challacombe J.F."/>
            <person name="Rainey D."/>
            <person name="Gillaspy A.F."/>
            <person name="Carson M."/>
            <person name="Gipson J."/>
            <person name="Gipson M."/>
            <person name="Bruce D."/>
            <person name="Detter J.C."/>
            <person name="Han C.S."/>
            <person name="Land M."/>
            <person name="Tapia R."/>
            <person name="Thompson L.S."/>
            <person name="Orvis J."/>
            <person name="Zaitshik J."/>
            <person name="Barnes G."/>
            <person name="Brettin T.S."/>
            <person name="Dyer D.W."/>
            <person name="Inzana T.J."/>
        </authorList>
    </citation>
    <scope>NUCLEOTIDE SEQUENCE [LARGE SCALE GENOMIC DNA]</scope>
    <source>
        <strain>2336</strain>
    </source>
</reference>
<evidence type="ECO:0000255" key="1">
    <source>
        <dbReference type="HAMAP-Rule" id="MF_00358"/>
    </source>
</evidence>
<evidence type="ECO:0000256" key="2">
    <source>
        <dbReference type="SAM" id="MobiDB-lite"/>
    </source>
</evidence>
<evidence type="ECO:0000305" key="3"/>
<proteinExistence type="inferred from homology"/>
<sequence length="71" mass="8506">MPVIKVRENESFDVALRRFKRSCEKAGILAEVRSREFYEKPTTIRKRENATRAKRHAKRVARENARNTRLY</sequence>
<keyword id="KW-0687">Ribonucleoprotein</keyword>
<keyword id="KW-0689">Ribosomal protein</keyword>
<comment type="similarity">
    <text evidence="1">Belongs to the bacterial ribosomal protein bS21 family.</text>
</comment>
<organism>
    <name type="scientific">Histophilus somni (strain 2336)</name>
    <name type="common">Haemophilus somnus</name>
    <dbReference type="NCBI Taxonomy" id="228400"/>
    <lineage>
        <taxon>Bacteria</taxon>
        <taxon>Pseudomonadati</taxon>
        <taxon>Pseudomonadota</taxon>
        <taxon>Gammaproteobacteria</taxon>
        <taxon>Pasteurellales</taxon>
        <taxon>Pasteurellaceae</taxon>
        <taxon>Histophilus</taxon>
    </lineage>
</organism>
<dbReference type="EMBL" id="CP000947">
    <property type="protein sequence ID" value="ACA32514.1"/>
    <property type="molecule type" value="Genomic_DNA"/>
</dbReference>
<dbReference type="RefSeq" id="WP_005717672.1">
    <property type="nucleotide sequence ID" value="NC_010519.1"/>
</dbReference>
<dbReference type="SMR" id="B0USS4"/>
<dbReference type="STRING" id="228400.HSM_0841"/>
<dbReference type="GeneID" id="77206556"/>
<dbReference type="KEGG" id="hsm:HSM_0841"/>
<dbReference type="HOGENOM" id="CLU_159258_1_0_6"/>
<dbReference type="GO" id="GO:1990904">
    <property type="term" value="C:ribonucleoprotein complex"/>
    <property type="evidence" value="ECO:0007669"/>
    <property type="project" value="UniProtKB-KW"/>
</dbReference>
<dbReference type="GO" id="GO:0005840">
    <property type="term" value="C:ribosome"/>
    <property type="evidence" value="ECO:0007669"/>
    <property type="project" value="UniProtKB-KW"/>
</dbReference>
<dbReference type="GO" id="GO:0003735">
    <property type="term" value="F:structural constituent of ribosome"/>
    <property type="evidence" value="ECO:0007669"/>
    <property type="project" value="InterPro"/>
</dbReference>
<dbReference type="GO" id="GO:0006412">
    <property type="term" value="P:translation"/>
    <property type="evidence" value="ECO:0007669"/>
    <property type="project" value="UniProtKB-UniRule"/>
</dbReference>
<dbReference type="Gene3D" id="1.20.5.1150">
    <property type="entry name" value="Ribosomal protein S8"/>
    <property type="match status" value="1"/>
</dbReference>
<dbReference type="HAMAP" id="MF_00358">
    <property type="entry name" value="Ribosomal_bS21"/>
    <property type="match status" value="1"/>
</dbReference>
<dbReference type="InterPro" id="IPR001911">
    <property type="entry name" value="Ribosomal_bS21"/>
</dbReference>
<dbReference type="InterPro" id="IPR018278">
    <property type="entry name" value="Ribosomal_bS21_CS"/>
</dbReference>
<dbReference type="InterPro" id="IPR038380">
    <property type="entry name" value="Ribosomal_bS21_sf"/>
</dbReference>
<dbReference type="NCBIfam" id="TIGR00030">
    <property type="entry name" value="S21p"/>
    <property type="match status" value="1"/>
</dbReference>
<dbReference type="PANTHER" id="PTHR21109">
    <property type="entry name" value="MITOCHONDRIAL 28S RIBOSOMAL PROTEIN S21"/>
    <property type="match status" value="1"/>
</dbReference>
<dbReference type="PANTHER" id="PTHR21109:SF22">
    <property type="entry name" value="SMALL RIBOSOMAL SUBUNIT PROTEIN BS21"/>
    <property type="match status" value="1"/>
</dbReference>
<dbReference type="Pfam" id="PF01165">
    <property type="entry name" value="Ribosomal_S21"/>
    <property type="match status" value="1"/>
</dbReference>
<dbReference type="PRINTS" id="PR00976">
    <property type="entry name" value="RIBOSOMALS21"/>
</dbReference>
<dbReference type="PROSITE" id="PS01181">
    <property type="entry name" value="RIBOSOMAL_S21"/>
    <property type="match status" value="1"/>
</dbReference>
<accession>B0USS4</accession>
<feature type="chain" id="PRO_1000079410" description="Small ribosomal subunit protein bS21">
    <location>
        <begin position="1"/>
        <end position="71"/>
    </location>
</feature>
<feature type="region of interest" description="Disordered" evidence="2">
    <location>
        <begin position="47"/>
        <end position="71"/>
    </location>
</feature>
<feature type="compositionally biased region" description="Basic and acidic residues" evidence="2">
    <location>
        <begin position="60"/>
        <end position="71"/>
    </location>
</feature>
<name>RS21_HISS2</name>
<gene>
    <name evidence="1" type="primary">rpsU</name>
    <name type="ordered locus">HSM_0841</name>
</gene>
<protein>
    <recommendedName>
        <fullName evidence="1">Small ribosomal subunit protein bS21</fullName>
    </recommendedName>
    <alternativeName>
        <fullName evidence="3">30S ribosomal protein S21</fullName>
    </alternativeName>
</protein>